<proteinExistence type="evidence at transcript level"/>
<organism>
    <name type="scientific">Homo sapiens</name>
    <name type="common">Human</name>
    <dbReference type="NCBI Taxonomy" id="9606"/>
    <lineage>
        <taxon>Eukaryota</taxon>
        <taxon>Metazoa</taxon>
        <taxon>Chordata</taxon>
        <taxon>Craniata</taxon>
        <taxon>Vertebrata</taxon>
        <taxon>Euteleostomi</taxon>
        <taxon>Mammalia</taxon>
        <taxon>Eutheria</taxon>
        <taxon>Euarchontoglires</taxon>
        <taxon>Primates</taxon>
        <taxon>Haplorrhini</taxon>
        <taxon>Catarrhini</taxon>
        <taxon>Hominidae</taxon>
        <taxon>Homo</taxon>
    </lineage>
</organism>
<name>DB125_HUMAN</name>
<comment type="function">
    <text evidence="4">Has antibacterial activity.</text>
</comment>
<comment type="subcellular location">
    <subcellularLocation>
        <location evidence="4">Secreted</location>
    </subcellularLocation>
</comment>
<comment type="similarity">
    <text evidence="4">Belongs to the beta-defensin family.</text>
</comment>
<sequence>MNILMLTFIICGLLTRVTKGSFEPQKCWKNNVGHCRRRCLDTERYILLCRNKLSCCISIISHEYTRRPAFPVIHLEDITLDYSDVDSFTGSPVSMLNDLITFDTTKFGETMTPETNTPETTMPPSEATTPETTMPPSETATSETMPPPSQTALTHN</sequence>
<keyword id="KW-0044">Antibiotic</keyword>
<keyword id="KW-0929">Antimicrobial</keyword>
<keyword id="KW-0165">Cleavage on pair of basic residues</keyword>
<keyword id="KW-0211">Defensin</keyword>
<keyword id="KW-1015">Disulfide bond</keyword>
<keyword id="KW-1185">Reference proteome</keyword>
<keyword id="KW-0964">Secreted</keyword>
<keyword id="KW-0732">Signal</keyword>
<gene>
    <name type="primary">DEFB125</name>
    <name type="synonym">DEFB25</name>
</gene>
<accession>Q8N687</accession>
<accession>A1A502</accession>
<accession>Q7Z7B9</accession>
<evidence type="ECO:0000250" key="1"/>
<evidence type="ECO:0000255" key="2"/>
<evidence type="ECO:0000256" key="3">
    <source>
        <dbReference type="SAM" id="MobiDB-lite"/>
    </source>
</evidence>
<evidence type="ECO:0000305" key="4"/>
<dbReference type="EMBL" id="AF525927">
    <property type="protein sequence ID" value="AAP47220.1"/>
    <property type="molecule type" value="mRNA"/>
</dbReference>
<dbReference type="EMBL" id="AL360078">
    <property type="status" value="NOT_ANNOTATED_CDS"/>
    <property type="molecule type" value="Genomic_DNA"/>
</dbReference>
<dbReference type="EMBL" id="CH471133">
    <property type="protein sequence ID" value="EAX10689.1"/>
    <property type="molecule type" value="Genomic_DNA"/>
</dbReference>
<dbReference type="EMBL" id="BC128195">
    <property type="protein sequence ID" value="AAI28196.1"/>
    <property type="molecule type" value="mRNA"/>
</dbReference>
<dbReference type="EMBL" id="BC128196">
    <property type="protein sequence ID" value="AAI28197.1"/>
    <property type="molecule type" value="mRNA"/>
</dbReference>
<dbReference type="EMBL" id="AY122477">
    <property type="protein sequence ID" value="AAM93918.1"/>
    <property type="molecule type" value="mRNA"/>
</dbReference>
<dbReference type="CCDS" id="CCDS12989.2"/>
<dbReference type="RefSeq" id="NP_697020.2">
    <property type="nucleotide sequence ID" value="NM_153325.4"/>
</dbReference>
<dbReference type="BioGRID" id="128851">
    <property type="interactions" value="48"/>
</dbReference>
<dbReference type="IntAct" id="Q8N687">
    <property type="interactions" value="17"/>
</dbReference>
<dbReference type="STRING" id="9606.ENSP00000371847"/>
<dbReference type="iPTMnet" id="Q8N687"/>
<dbReference type="PhosphoSitePlus" id="Q8N687"/>
<dbReference type="BioMuta" id="DEFB125"/>
<dbReference type="DMDM" id="152112501"/>
<dbReference type="PaxDb" id="9606-ENSP00000371847"/>
<dbReference type="Antibodypedia" id="51066">
    <property type="antibodies" value="8 antibodies from 7 providers"/>
</dbReference>
<dbReference type="DNASU" id="245938"/>
<dbReference type="Ensembl" id="ENST00000382410.3">
    <property type="protein sequence ID" value="ENSP00000371847.2"/>
    <property type="gene ID" value="ENSG00000178591.7"/>
</dbReference>
<dbReference type="GeneID" id="245938"/>
<dbReference type="KEGG" id="hsa:245938"/>
<dbReference type="MANE-Select" id="ENST00000382410.3">
    <property type="protein sequence ID" value="ENSP00000371847.2"/>
    <property type="RefSeq nucleotide sequence ID" value="NM_153325.4"/>
    <property type="RefSeq protein sequence ID" value="NP_697020.2"/>
</dbReference>
<dbReference type="UCSC" id="uc002wcw.4">
    <property type="organism name" value="human"/>
</dbReference>
<dbReference type="AGR" id="HGNC:18105"/>
<dbReference type="CTD" id="245938"/>
<dbReference type="GeneCards" id="DEFB125"/>
<dbReference type="HGNC" id="HGNC:18105">
    <property type="gene designation" value="DEFB125"/>
</dbReference>
<dbReference type="HPA" id="ENSG00000178591">
    <property type="expression patterns" value="Group enriched (epididymis, seminal vesicle)"/>
</dbReference>
<dbReference type="neXtProt" id="NX_Q8N687"/>
<dbReference type="PharmGKB" id="PA38501"/>
<dbReference type="VEuPathDB" id="HostDB:ENSG00000178591"/>
<dbReference type="eggNOG" id="ENOG502RU2M">
    <property type="taxonomic scope" value="Eukaryota"/>
</dbReference>
<dbReference type="GeneTree" id="ENSGT00390000000604"/>
<dbReference type="HOGENOM" id="CLU_152039_0_0_1"/>
<dbReference type="InParanoid" id="Q8N687"/>
<dbReference type="OMA" id="CFHVERY"/>
<dbReference type="OrthoDB" id="9835818at2759"/>
<dbReference type="PAN-GO" id="Q8N687">
    <property type="GO annotations" value="0 GO annotations based on evolutionary models"/>
</dbReference>
<dbReference type="PhylomeDB" id="Q8N687"/>
<dbReference type="PathwayCommons" id="Q8N687"/>
<dbReference type="Reactome" id="R-HSA-1461957">
    <property type="pathway name" value="Beta defensins"/>
</dbReference>
<dbReference type="Reactome" id="R-HSA-1461973">
    <property type="pathway name" value="Defensins"/>
</dbReference>
<dbReference type="BioGRID-ORCS" id="245938">
    <property type="hits" value="44 hits in 1136 CRISPR screens"/>
</dbReference>
<dbReference type="ChiTaRS" id="DEFB125">
    <property type="organism name" value="human"/>
</dbReference>
<dbReference type="GenomeRNAi" id="245938"/>
<dbReference type="Pharos" id="Q8N687">
    <property type="development level" value="Tdark"/>
</dbReference>
<dbReference type="PRO" id="PR:Q8N687"/>
<dbReference type="Proteomes" id="UP000005640">
    <property type="component" value="Chromosome 20"/>
</dbReference>
<dbReference type="RNAct" id="Q8N687">
    <property type="molecule type" value="protein"/>
</dbReference>
<dbReference type="Bgee" id="ENSG00000178591">
    <property type="expression patterns" value="Expressed in cauda epididymis and 3 other cell types or tissues"/>
</dbReference>
<dbReference type="GO" id="GO:0005576">
    <property type="term" value="C:extracellular region"/>
    <property type="evidence" value="ECO:0007669"/>
    <property type="project" value="UniProtKB-SubCell"/>
</dbReference>
<dbReference type="GO" id="GO:0050829">
    <property type="term" value="P:defense response to Gram-negative bacterium"/>
    <property type="evidence" value="ECO:0007669"/>
    <property type="project" value="UniProtKB-ARBA"/>
</dbReference>
<dbReference type="GO" id="GO:0045087">
    <property type="term" value="P:innate immune response"/>
    <property type="evidence" value="ECO:0007669"/>
    <property type="project" value="InterPro"/>
</dbReference>
<dbReference type="Gene3D" id="3.10.360.10">
    <property type="entry name" value="Antimicrobial Peptide, Beta-defensin 2, Chain A"/>
    <property type="match status" value="1"/>
</dbReference>
<dbReference type="InterPro" id="IPR050544">
    <property type="entry name" value="Beta-defensin"/>
</dbReference>
<dbReference type="InterPro" id="IPR025933">
    <property type="entry name" value="Beta_defensin_dom"/>
</dbReference>
<dbReference type="PANTHER" id="PTHR15001">
    <property type="entry name" value="BETA-DEFENSIN 123-RELATED"/>
    <property type="match status" value="1"/>
</dbReference>
<dbReference type="PANTHER" id="PTHR15001:SF13">
    <property type="entry name" value="BETA-DEFENSIN 125"/>
    <property type="match status" value="1"/>
</dbReference>
<dbReference type="Pfam" id="PF13841">
    <property type="entry name" value="Defensin_beta_2"/>
    <property type="match status" value="1"/>
</dbReference>
<reference key="1">
    <citation type="journal article" date="2003" name="Genomics">
        <title>Distribution of new human beta-defensin genes clustered on chromosome 20 in functionally different segments of epididymis.</title>
        <authorList>
            <person name="Rodriguez-Jimenez F.-J."/>
            <person name="Krause A."/>
            <person name="Schulz S."/>
            <person name="Forssmann W.-G."/>
            <person name="Conejo-Garcia J.-R."/>
            <person name="Schreeb R."/>
            <person name="Motzkus D."/>
        </authorList>
    </citation>
    <scope>NUCLEOTIDE SEQUENCE [MRNA]</scope>
    <source>
        <tissue>Testis</tissue>
    </source>
</reference>
<reference key="2">
    <citation type="journal article" date="2001" name="Nature">
        <title>The DNA sequence and comparative analysis of human chromosome 20.</title>
        <authorList>
            <person name="Deloukas P."/>
            <person name="Matthews L.H."/>
            <person name="Ashurst J.L."/>
            <person name="Burton J."/>
            <person name="Gilbert J.G.R."/>
            <person name="Jones M."/>
            <person name="Stavrides G."/>
            <person name="Almeida J.P."/>
            <person name="Babbage A.K."/>
            <person name="Bagguley C.L."/>
            <person name="Bailey J."/>
            <person name="Barlow K.F."/>
            <person name="Bates K.N."/>
            <person name="Beard L.M."/>
            <person name="Beare D.M."/>
            <person name="Beasley O.P."/>
            <person name="Bird C.P."/>
            <person name="Blakey S.E."/>
            <person name="Bridgeman A.M."/>
            <person name="Brown A.J."/>
            <person name="Buck D."/>
            <person name="Burrill W.D."/>
            <person name="Butler A.P."/>
            <person name="Carder C."/>
            <person name="Carter N.P."/>
            <person name="Chapman J.C."/>
            <person name="Clamp M."/>
            <person name="Clark G."/>
            <person name="Clark L.N."/>
            <person name="Clark S.Y."/>
            <person name="Clee C.M."/>
            <person name="Clegg S."/>
            <person name="Cobley V.E."/>
            <person name="Collier R.E."/>
            <person name="Connor R.E."/>
            <person name="Corby N.R."/>
            <person name="Coulson A."/>
            <person name="Coville G.J."/>
            <person name="Deadman R."/>
            <person name="Dhami P.D."/>
            <person name="Dunn M."/>
            <person name="Ellington A.G."/>
            <person name="Frankland J.A."/>
            <person name="Fraser A."/>
            <person name="French L."/>
            <person name="Garner P."/>
            <person name="Grafham D.V."/>
            <person name="Griffiths C."/>
            <person name="Griffiths M.N.D."/>
            <person name="Gwilliam R."/>
            <person name="Hall R.E."/>
            <person name="Hammond S."/>
            <person name="Harley J.L."/>
            <person name="Heath P.D."/>
            <person name="Ho S."/>
            <person name="Holden J.L."/>
            <person name="Howden P.J."/>
            <person name="Huckle E."/>
            <person name="Hunt A.R."/>
            <person name="Hunt S.E."/>
            <person name="Jekosch K."/>
            <person name="Johnson C.M."/>
            <person name="Johnson D."/>
            <person name="Kay M.P."/>
            <person name="Kimberley A.M."/>
            <person name="King A."/>
            <person name="Knights A."/>
            <person name="Laird G.K."/>
            <person name="Lawlor S."/>
            <person name="Lehvaeslaiho M.H."/>
            <person name="Leversha M.A."/>
            <person name="Lloyd C."/>
            <person name="Lloyd D.M."/>
            <person name="Lovell J.D."/>
            <person name="Marsh V.L."/>
            <person name="Martin S.L."/>
            <person name="McConnachie L.J."/>
            <person name="McLay K."/>
            <person name="McMurray A.A."/>
            <person name="Milne S.A."/>
            <person name="Mistry D."/>
            <person name="Moore M.J.F."/>
            <person name="Mullikin J.C."/>
            <person name="Nickerson T."/>
            <person name="Oliver K."/>
            <person name="Parker A."/>
            <person name="Patel R."/>
            <person name="Pearce T.A.V."/>
            <person name="Peck A.I."/>
            <person name="Phillimore B.J.C.T."/>
            <person name="Prathalingam S.R."/>
            <person name="Plumb R.W."/>
            <person name="Ramsay H."/>
            <person name="Rice C.M."/>
            <person name="Ross M.T."/>
            <person name="Scott C.E."/>
            <person name="Sehra H.K."/>
            <person name="Shownkeen R."/>
            <person name="Sims S."/>
            <person name="Skuce C.D."/>
            <person name="Smith M.L."/>
            <person name="Soderlund C."/>
            <person name="Steward C.A."/>
            <person name="Sulston J.E."/>
            <person name="Swann R.M."/>
            <person name="Sycamore N."/>
            <person name="Taylor R."/>
            <person name="Tee L."/>
            <person name="Thomas D.W."/>
            <person name="Thorpe A."/>
            <person name="Tracey A."/>
            <person name="Tromans A.C."/>
            <person name="Vaudin M."/>
            <person name="Wall M."/>
            <person name="Wallis J.M."/>
            <person name="Whitehead S.L."/>
            <person name="Whittaker P."/>
            <person name="Willey D.L."/>
            <person name="Williams L."/>
            <person name="Williams S.A."/>
            <person name="Wilming L."/>
            <person name="Wray P.W."/>
            <person name="Hubbard T."/>
            <person name="Durbin R.M."/>
            <person name="Bentley D.R."/>
            <person name="Beck S."/>
            <person name="Rogers J."/>
        </authorList>
    </citation>
    <scope>NUCLEOTIDE SEQUENCE [LARGE SCALE GENOMIC DNA]</scope>
</reference>
<reference key="3">
    <citation type="submission" date="2005-09" db="EMBL/GenBank/DDBJ databases">
        <authorList>
            <person name="Mural R.J."/>
            <person name="Istrail S."/>
            <person name="Sutton G.G."/>
            <person name="Florea L."/>
            <person name="Halpern A.L."/>
            <person name="Mobarry C.M."/>
            <person name="Lippert R."/>
            <person name="Walenz B."/>
            <person name="Shatkay H."/>
            <person name="Dew I."/>
            <person name="Miller J.R."/>
            <person name="Flanigan M.J."/>
            <person name="Edwards N.J."/>
            <person name="Bolanos R."/>
            <person name="Fasulo D."/>
            <person name="Halldorsson B.V."/>
            <person name="Hannenhalli S."/>
            <person name="Turner R."/>
            <person name="Yooseph S."/>
            <person name="Lu F."/>
            <person name="Nusskern D.R."/>
            <person name="Shue B.C."/>
            <person name="Zheng X.H."/>
            <person name="Zhong F."/>
            <person name="Delcher A.L."/>
            <person name="Huson D.H."/>
            <person name="Kravitz S.A."/>
            <person name="Mouchard L."/>
            <person name="Reinert K."/>
            <person name="Remington K.A."/>
            <person name="Clark A.G."/>
            <person name="Waterman M.S."/>
            <person name="Eichler E.E."/>
            <person name="Adams M.D."/>
            <person name="Hunkapiller M.W."/>
            <person name="Myers E.W."/>
            <person name="Venter J.C."/>
        </authorList>
    </citation>
    <scope>NUCLEOTIDE SEQUENCE [LARGE SCALE GENOMIC DNA]</scope>
</reference>
<reference key="4">
    <citation type="journal article" date="2004" name="Genome Res.">
        <title>The status, quality, and expansion of the NIH full-length cDNA project: the Mammalian Gene Collection (MGC).</title>
        <authorList>
            <consortium name="The MGC Project Team"/>
        </authorList>
    </citation>
    <scope>NUCLEOTIDE SEQUENCE [LARGE SCALE MRNA]</scope>
</reference>
<reference key="5">
    <citation type="journal article" date="2002" name="Proc. Natl. Acad. Sci. U.S.A.">
        <title>Discovery of five conserved beta-defensin gene clusters using a computational search strategy.</title>
        <authorList>
            <person name="Schutte B.C."/>
            <person name="Mitros J.P."/>
            <person name="Bartlett J.A."/>
            <person name="Walters J.D."/>
            <person name="Jia H.P."/>
            <person name="Welsh M.J."/>
            <person name="Casavant T.L."/>
            <person name="McCray P.B. Jr."/>
        </authorList>
    </citation>
    <scope>NUCLEOTIDE SEQUENCE [MRNA] OF 5-156</scope>
    <scope>IDENTIFICATION</scope>
    <source>
        <tissue>B-cell</tissue>
        <tissue>Fetal lung</tissue>
        <tissue>Testis</tissue>
    </source>
</reference>
<feature type="signal peptide" evidence="2">
    <location>
        <begin position="1"/>
        <end position="20"/>
    </location>
</feature>
<feature type="peptide" id="PRO_0000006996" description="Beta-defensin 125">
    <location>
        <begin position="21"/>
        <end position="67"/>
    </location>
</feature>
<feature type="propeptide" id="PRO_0000006997" evidence="2">
    <location>
        <begin position="68"/>
        <end position="156"/>
    </location>
</feature>
<feature type="region of interest" description="Disordered" evidence="3">
    <location>
        <begin position="108"/>
        <end position="156"/>
    </location>
</feature>
<feature type="compositionally biased region" description="Low complexity" evidence="3">
    <location>
        <begin position="109"/>
        <end position="144"/>
    </location>
</feature>
<feature type="disulfide bond" evidence="1">
    <location>
        <begin position="27"/>
        <end position="55"/>
    </location>
</feature>
<feature type="disulfide bond" evidence="1">
    <location>
        <begin position="35"/>
        <end position="49"/>
    </location>
</feature>
<feature type="disulfide bond" evidence="1">
    <location>
        <begin position="39"/>
        <end position="56"/>
    </location>
</feature>
<feature type="sequence variant" id="VAR_061134" description="In dbSNP:rs41276376.">
    <original>H</original>
    <variation>Y</variation>
    <location>
        <position position="62"/>
    </location>
</feature>
<protein>
    <recommendedName>
        <fullName>Beta-defensin 125</fullName>
    </recommendedName>
    <alternativeName>
        <fullName>Beta-defensin 25</fullName>
        <shortName>DEFB-25</shortName>
    </alternativeName>
    <alternativeName>
        <fullName>Defensin, beta 125</fullName>
    </alternativeName>
</protein>